<proteinExistence type="inferred from homology"/>
<feature type="chain" id="PRO_0000141478" description="4-hydroxy-tetrahydrodipicolinate reductase">
    <location>
        <begin position="1"/>
        <end position="280"/>
    </location>
</feature>
<feature type="active site" description="Proton donor/acceptor" evidence="1">
    <location>
        <position position="166"/>
    </location>
</feature>
<feature type="active site" description="Proton donor" evidence="1">
    <location>
        <position position="170"/>
    </location>
</feature>
<feature type="binding site" evidence="1">
    <location>
        <begin position="14"/>
        <end position="19"/>
    </location>
    <ligand>
        <name>NAD(+)</name>
        <dbReference type="ChEBI" id="CHEBI:57540"/>
    </ligand>
</feature>
<feature type="binding site" evidence="1">
    <location>
        <position position="40"/>
    </location>
    <ligand>
        <name>NAD(+)</name>
        <dbReference type="ChEBI" id="CHEBI:57540"/>
    </ligand>
</feature>
<feature type="binding site" evidence="1">
    <location>
        <begin position="106"/>
        <end position="108"/>
    </location>
    <ligand>
        <name>NAD(+)</name>
        <dbReference type="ChEBI" id="CHEBI:57540"/>
    </ligand>
</feature>
<feature type="binding site" evidence="1">
    <location>
        <begin position="130"/>
        <end position="133"/>
    </location>
    <ligand>
        <name>NAD(+)</name>
        <dbReference type="ChEBI" id="CHEBI:57540"/>
    </ligand>
</feature>
<feature type="binding site" evidence="1">
    <location>
        <position position="167"/>
    </location>
    <ligand>
        <name>(S)-2,3,4,5-tetrahydrodipicolinate</name>
        <dbReference type="ChEBI" id="CHEBI:16845"/>
    </ligand>
</feature>
<feature type="binding site" evidence="1">
    <location>
        <begin position="176"/>
        <end position="177"/>
    </location>
    <ligand>
        <name>(S)-2,3,4,5-tetrahydrodipicolinate</name>
        <dbReference type="ChEBI" id="CHEBI:16845"/>
    </ligand>
</feature>
<reference key="1">
    <citation type="journal article" date="2003" name="Proc. Natl. Acad. Sci. U.S.A.">
        <title>Complete genome sequence of the marine planctomycete Pirellula sp. strain 1.</title>
        <authorList>
            <person name="Gloeckner F.O."/>
            <person name="Kube M."/>
            <person name="Bauer M."/>
            <person name="Teeling H."/>
            <person name="Lombardot T."/>
            <person name="Ludwig W."/>
            <person name="Gade D."/>
            <person name="Beck A."/>
            <person name="Borzym K."/>
            <person name="Heitmann K."/>
            <person name="Rabus R."/>
            <person name="Schlesner H."/>
            <person name="Amann R."/>
            <person name="Reinhardt R."/>
        </authorList>
    </citation>
    <scope>NUCLEOTIDE SEQUENCE [LARGE SCALE GENOMIC DNA]</scope>
    <source>
        <strain>DSM 10527 / NCIMB 13988 / SH1</strain>
    </source>
</reference>
<name>DAPB_RHOBA</name>
<gene>
    <name evidence="1" type="primary">dapB</name>
    <name type="ordered locus">RB11959</name>
</gene>
<organism>
    <name type="scientific">Rhodopirellula baltica (strain DSM 10527 / NCIMB 13988 / SH1)</name>
    <dbReference type="NCBI Taxonomy" id="243090"/>
    <lineage>
        <taxon>Bacteria</taxon>
        <taxon>Pseudomonadati</taxon>
        <taxon>Planctomycetota</taxon>
        <taxon>Planctomycetia</taxon>
        <taxon>Pirellulales</taxon>
        <taxon>Pirellulaceae</taxon>
        <taxon>Rhodopirellula</taxon>
    </lineage>
</organism>
<accession>Q7UJD7</accession>
<sequence length="280" mass="29223">MADSTGPISLTVHGAAGRMGRRVVALGLADPNFQLVGAIDHAKSDHLGQDSGAVAGEAPSGIEISSHWPVLDDAATNQAVIDFSLPEAIDGCVEHCVKVGSPLVVATTGLSDEQKQNLSEAAASIPVVWAPSMSLAVNLSMKIAEQITAALKDVAGGLDVEILERHHRFKADAPSGTALKFGELIAGQLGESTSHVHGREGHTGARTREEIGYHAIRVGDNPGEHTIVFGMLGEKIELNVAASNRDCYASGALAAAKWLIHQKKGPGLYSMFDVLGMSDN</sequence>
<keyword id="KW-0028">Amino-acid biosynthesis</keyword>
<keyword id="KW-0963">Cytoplasm</keyword>
<keyword id="KW-0220">Diaminopimelate biosynthesis</keyword>
<keyword id="KW-0457">Lysine biosynthesis</keyword>
<keyword id="KW-0520">NAD</keyword>
<keyword id="KW-0521">NADP</keyword>
<keyword id="KW-0560">Oxidoreductase</keyword>
<keyword id="KW-1185">Reference proteome</keyword>
<comment type="function">
    <text evidence="1">Catalyzes the conversion of 4-hydroxy-tetrahydrodipicolinate (HTPA) to tetrahydrodipicolinate.</text>
</comment>
<comment type="catalytic activity">
    <reaction evidence="1">
        <text>(S)-2,3,4,5-tetrahydrodipicolinate + NAD(+) + H2O = (2S,4S)-4-hydroxy-2,3,4,5-tetrahydrodipicolinate + NADH + H(+)</text>
        <dbReference type="Rhea" id="RHEA:35323"/>
        <dbReference type="ChEBI" id="CHEBI:15377"/>
        <dbReference type="ChEBI" id="CHEBI:15378"/>
        <dbReference type="ChEBI" id="CHEBI:16845"/>
        <dbReference type="ChEBI" id="CHEBI:57540"/>
        <dbReference type="ChEBI" id="CHEBI:57945"/>
        <dbReference type="ChEBI" id="CHEBI:67139"/>
        <dbReference type="EC" id="1.17.1.8"/>
    </reaction>
</comment>
<comment type="catalytic activity">
    <reaction evidence="1">
        <text>(S)-2,3,4,5-tetrahydrodipicolinate + NADP(+) + H2O = (2S,4S)-4-hydroxy-2,3,4,5-tetrahydrodipicolinate + NADPH + H(+)</text>
        <dbReference type="Rhea" id="RHEA:35331"/>
        <dbReference type="ChEBI" id="CHEBI:15377"/>
        <dbReference type="ChEBI" id="CHEBI:15378"/>
        <dbReference type="ChEBI" id="CHEBI:16845"/>
        <dbReference type="ChEBI" id="CHEBI:57783"/>
        <dbReference type="ChEBI" id="CHEBI:58349"/>
        <dbReference type="ChEBI" id="CHEBI:67139"/>
        <dbReference type="EC" id="1.17.1.8"/>
    </reaction>
</comment>
<comment type="pathway">
    <text evidence="1">Amino-acid biosynthesis; L-lysine biosynthesis via DAP pathway; (S)-tetrahydrodipicolinate from L-aspartate: step 4/4.</text>
</comment>
<comment type="subcellular location">
    <subcellularLocation>
        <location evidence="1">Cytoplasm</location>
    </subcellularLocation>
</comment>
<comment type="similarity">
    <text evidence="1">Belongs to the DapB family.</text>
</comment>
<comment type="caution">
    <text evidence="2">Was originally thought to be a dihydrodipicolinate reductase (DHDPR), catalyzing the conversion of dihydrodipicolinate to tetrahydrodipicolinate. However, it was shown in E.coli that the substrate of the enzymatic reaction is not dihydrodipicolinate (DHDP) but in fact (2S,4S)-4-hydroxy-2,3,4,5-tetrahydrodipicolinic acid (HTPA), the product released by the DapA-catalyzed reaction.</text>
</comment>
<evidence type="ECO:0000255" key="1">
    <source>
        <dbReference type="HAMAP-Rule" id="MF_00102"/>
    </source>
</evidence>
<evidence type="ECO:0000305" key="2"/>
<dbReference type="EC" id="1.17.1.8" evidence="1"/>
<dbReference type="EMBL" id="BX294154">
    <property type="protein sequence ID" value="CAD77321.1"/>
    <property type="molecule type" value="Genomic_DNA"/>
</dbReference>
<dbReference type="RefSeq" id="NP_870246.1">
    <property type="nucleotide sequence ID" value="NC_005027.1"/>
</dbReference>
<dbReference type="RefSeq" id="WP_011123511.1">
    <property type="nucleotide sequence ID" value="NC_005027.1"/>
</dbReference>
<dbReference type="SMR" id="Q7UJD7"/>
<dbReference type="FunCoup" id="Q7UJD7">
    <property type="interactions" value="457"/>
</dbReference>
<dbReference type="STRING" id="243090.RB11959"/>
<dbReference type="EnsemblBacteria" id="CAD77321">
    <property type="protein sequence ID" value="CAD77321"/>
    <property type="gene ID" value="RB11959"/>
</dbReference>
<dbReference type="KEGG" id="rba:RB11959"/>
<dbReference type="PATRIC" id="fig|243090.15.peg.5777"/>
<dbReference type="eggNOG" id="COG0289">
    <property type="taxonomic scope" value="Bacteria"/>
</dbReference>
<dbReference type="HOGENOM" id="CLU_047479_2_1_0"/>
<dbReference type="InParanoid" id="Q7UJD7"/>
<dbReference type="OrthoDB" id="9790352at2"/>
<dbReference type="UniPathway" id="UPA00034">
    <property type="reaction ID" value="UER00018"/>
</dbReference>
<dbReference type="Proteomes" id="UP000001025">
    <property type="component" value="Chromosome"/>
</dbReference>
<dbReference type="GO" id="GO:0005829">
    <property type="term" value="C:cytosol"/>
    <property type="evidence" value="ECO:0000318"/>
    <property type="project" value="GO_Central"/>
</dbReference>
<dbReference type="GO" id="GO:0008839">
    <property type="term" value="F:4-hydroxy-tetrahydrodipicolinate reductase"/>
    <property type="evidence" value="ECO:0000318"/>
    <property type="project" value="GO_Central"/>
</dbReference>
<dbReference type="GO" id="GO:0051287">
    <property type="term" value="F:NAD binding"/>
    <property type="evidence" value="ECO:0007669"/>
    <property type="project" value="UniProtKB-UniRule"/>
</dbReference>
<dbReference type="GO" id="GO:0050661">
    <property type="term" value="F:NADP binding"/>
    <property type="evidence" value="ECO:0007669"/>
    <property type="project" value="UniProtKB-UniRule"/>
</dbReference>
<dbReference type="GO" id="GO:0016726">
    <property type="term" value="F:oxidoreductase activity, acting on CH or CH2 groups, NAD or NADP as acceptor"/>
    <property type="evidence" value="ECO:0007669"/>
    <property type="project" value="UniProtKB-UniRule"/>
</dbReference>
<dbReference type="GO" id="GO:0019877">
    <property type="term" value="P:diaminopimelate biosynthetic process"/>
    <property type="evidence" value="ECO:0000318"/>
    <property type="project" value="GO_Central"/>
</dbReference>
<dbReference type="GO" id="GO:0009089">
    <property type="term" value="P:lysine biosynthetic process via diaminopimelate"/>
    <property type="evidence" value="ECO:0007669"/>
    <property type="project" value="UniProtKB-UniRule"/>
</dbReference>
<dbReference type="CDD" id="cd02274">
    <property type="entry name" value="DHDPR_N"/>
    <property type="match status" value="1"/>
</dbReference>
<dbReference type="FunFam" id="3.30.360.10:FF:000004">
    <property type="entry name" value="4-hydroxy-tetrahydrodipicolinate reductase"/>
    <property type="match status" value="1"/>
</dbReference>
<dbReference type="Gene3D" id="3.30.360.10">
    <property type="entry name" value="Dihydrodipicolinate Reductase, domain 2"/>
    <property type="match status" value="1"/>
</dbReference>
<dbReference type="Gene3D" id="3.40.50.720">
    <property type="entry name" value="NAD(P)-binding Rossmann-like Domain"/>
    <property type="match status" value="1"/>
</dbReference>
<dbReference type="HAMAP" id="MF_00102">
    <property type="entry name" value="DapB"/>
    <property type="match status" value="1"/>
</dbReference>
<dbReference type="InterPro" id="IPR022663">
    <property type="entry name" value="DapB_C"/>
</dbReference>
<dbReference type="InterPro" id="IPR000846">
    <property type="entry name" value="DapB_N"/>
</dbReference>
<dbReference type="InterPro" id="IPR022664">
    <property type="entry name" value="DapB_N_CS"/>
</dbReference>
<dbReference type="InterPro" id="IPR023940">
    <property type="entry name" value="DHDPR_bac"/>
</dbReference>
<dbReference type="InterPro" id="IPR036291">
    <property type="entry name" value="NAD(P)-bd_dom_sf"/>
</dbReference>
<dbReference type="NCBIfam" id="TIGR00036">
    <property type="entry name" value="dapB"/>
    <property type="match status" value="1"/>
</dbReference>
<dbReference type="PANTHER" id="PTHR20836:SF0">
    <property type="entry name" value="4-HYDROXY-TETRAHYDRODIPICOLINATE REDUCTASE 1, CHLOROPLASTIC-RELATED"/>
    <property type="match status" value="1"/>
</dbReference>
<dbReference type="PANTHER" id="PTHR20836">
    <property type="entry name" value="DIHYDRODIPICOLINATE REDUCTASE"/>
    <property type="match status" value="1"/>
</dbReference>
<dbReference type="Pfam" id="PF05173">
    <property type="entry name" value="DapB_C"/>
    <property type="match status" value="1"/>
</dbReference>
<dbReference type="Pfam" id="PF01113">
    <property type="entry name" value="DapB_N"/>
    <property type="match status" value="1"/>
</dbReference>
<dbReference type="PIRSF" id="PIRSF000161">
    <property type="entry name" value="DHPR"/>
    <property type="match status" value="1"/>
</dbReference>
<dbReference type="SUPFAM" id="SSF55347">
    <property type="entry name" value="Glyceraldehyde-3-phosphate dehydrogenase-like, C-terminal domain"/>
    <property type="match status" value="1"/>
</dbReference>
<dbReference type="SUPFAM" id="SSF51735">
    <property type="entry name" value="NAD(P)-binding Rossmann-fold domains"/>
    <property type="match status" value="1"/>
</dbReference>
<dbReference type="PROSITE" id="PS01298">
    <property type="entry name" value="DAPB"/>
    <property type="match status" value="1"/>
</dbReference>
<protein>
    <recommendedName>
        <fullName evidence="1">4-hydroxy-tetrahydrodipicolinate reductase</fullName>
        <shortName evidence="1">HTPA reductase</shortName>
        <ecNumber evidence="1">1.17.1.8</ecNumber>
    </recommendedName>
</protein>